<gene>
    <name type="primary">cpkA</name>
    <name type="ordered locus">PH1282</name>
</gene>
<accession>O59023</accession>
<organism>
    <name type="scientific">Pyrococcus horikoshii (strain ATCC 700860 / DSM 12428 / JCM 9974 / NBRC 100139 / OT-3)</name>
    <dbReference type="NCBI Taxonomy" id="70601"/>
    <lineage>
        <taxon>Archaea</taxon>
        <taxon>Methanobacteriati</taxon>
        <taxon>Methanobacteriota</taxon>
        <taxon>Thermococci</taxon>
        <taxon>Thermococcales</taxon>
        <taxon>Thermococcaceae</taxon>
        <taxon>Pyrococcus</taxon>
    </lineage>
</organism>
<sequence length="314" mass="34235">MPERVVIALGGNALQQRGQKGTYDEMMENVRKTAKQIAEIIARGYEVVITHGNGPQVGTILLHMDAGQSLHGIPAQPMDVAGAMSQGWIGYMIQQALRNELRKRGIEKEVVTIITQTIVDKKDPAFQNPTKPVGPFYDEKTAKKLAKEKGWVVKEDAGRGWRRVVPSPDPKGHVEAETIRRLVESGIIVIASGGGGVPVIEENGEIKGVEAVIDKDLAGEKLAEEVNADILMILTDVNGAALYYGTEKETWLRNVKVEELEKYYQEGHFKAGSMGPKVLAAIRFIKNGGKRAIIAHLEKAVEALEGKTGTQVTP</sequence>
<evidence type="ECO:0000250" key="1"/>
<evidence type="ECO:0000305" key="2"/>
<feature type="chain" id="PRO_0000185150" description="Carbamate kinase">
    <location>
        <begin position="1"/>
        <end position="314"/>
    </location>
</feature>
<keyword id="KW-0067">ATP-binding</keyword>
<keyword id="KW-0963">Cytoplasm</keyword>
<keyword id="KW-0418">Kinase</keyword>
<keyword id="KW-0547">Nucleotide-binding</keyword>
<keyword id="KW-0808">Transferase</keyword>
<reference key="1">
    <citation type="journal article" date="1998" name="DNA Res.">
        <title>Complete sequence and gene organization of the genome of a hyper-thermophilic archaebacterium, Pyrococcus horikoshii OT3.</title>
        <authorList>
            <person name="Kawarabayasi Y."/>
            <person name="Sawada M."/>
            <person name="Horikawa H."/>
            <person name="Haikawa Y."/>
            <person name="Hino Y."/>
            <person name="Yamamoto S."/>
            <person name="Sekine M."/>
            <person name="Baba S."/>
            <person name="Kosugi H."/>
            <person name="Hosoyama A."/>
            <person name="Nagai Y."/>
            <person name="Sakai M."/>
            <person name="Ogura K."/>
            <person name="Otsuka R."/>
            <person name="Nakazawa H."/>
            <person name="Takamiya M."/>
            <person name="Ohfuku Y."/>
            <person name="Funahashi T."/>
            <person name="Tanaka T."/>
            <person name="Kudoh Y."/>
            <person name="Yamazaki J."/>
            <person name="Kushida N."/>
            <person name="Oguchi A."/>
            <person name="Aoki K."/>
            <person name="Yoshizawa T."/>
            <person name="Nakamura Y."/>
            <person name="Robb F.T."/>
            <person name="Horikoshi K."/>
            <person name="Masuchi Y."/>
            <person name="Shizuya H."/>
            <person name="Kikuchi H."/>
        </authorList>
    </citation>
    <scope>NUCLEOTIDE SEQUENCE [LARGE SCALE GENOMIC DNA]</scope>
    <source>
        <strain>ATCC 700860 / DSM 12428 / JCM 9974 / NBRC 100139 / OT-3</strain>
    </source>
</reference>
<proteinExistence type="inferred from homology"/>
<name>CPKA_PYRHO</name>
<comment type="catalytic activity">
    <reaction>
        <text>hydrogencarbonate + NH4(+) + ATP = carbamoyl phosphate + ADP + H2O + H(+)</text>
        <dbReference type="Rhea" id="RHEA:10152"/>
        <dbReference type="ChEBI" id="CHEBI:15377"/>
        <dbReference type="ChEBI" id="CHEBI:15378"/>
        <dbReference type="ChEBI" id="CHEBI:17544"/>
        <dbReference type="ChEBI" id="CHEBI:28938"/>
        <dbReference type="ChEBI" id="CHEBI:30616"/>
        <dbReference type="ChEBI" id="CHEBI:58228"/>
        <dbReference type="ChEBI" id="CHEBI:456216"/>
        <dbReference type="EC" id="2.7.2.2"/>
    </reaction>
</comment>
<comment type="subunit">
    <text evidence="1">Homodimer.</text>
</comment>
<comment type="subcellular location">
    <subcellularLocation>
        <location evidence="1">Cytoplasm</location>
    </subcellularLocation>
</comment>
<comment type="similarity">
    <text evidence="2">Belongs to the carbamate kinase family.</text>
</comment>
<dbReference type="EC" id="2.7.2.2"/>
<dbReference type="EMBL" id="BA000001">
    <property type="protein sequence ID" value="BAA30385.1"/>
    <property type="molecule type" value="Genomic_DNA"/>
</dbReference>
<dbReference type="PIR" id="G71073">
    <property type="entry name" value="G71073"/>
</dbReference>
<dbReference type="RefSeq" id="WP_010885368.1">
    <property type="nucleotide sequence ID" value="NC_000961.1"/>
</dbReference>
<dbReference type="SMR" id="O59023"/>
<dbReference type="STRING" id="70601.gene:9378249"/>
<dbReference type="EnsemblBacteria" id="BAA30385">
    <property type="protein sequence ID" value="BAA30385"/>
    <property type="gene ID" value="BAA30385"/>
</dbReference>
<dbReference type="GeneID" id="1443604"/>
<dbReference type="KEGG" id="pho:PH1282"/>
<dbReference type="eggNOG" id="arCOG00863">
    <property type="taxonomic scope" value="Archaea"/>
</dbReference>
<dbReference type="OrthoDB" id="31128at2157"/>
<dbReference type="Proteomes" id="UP000000752">
    <property type="component" value="Chromosome"/>
</dbReference>
<dbReference type="GO" id="GO:0005829">
    <property type="term" value="C:cytosol"/>
    <property type="evidence" value="ECO:0007669"/>
    <property type="project" value="TreeGrafter"/>
</dbReference>
<dbReference type="GO" id="GO:0005524">
    <property type="term" value="F:ATP binding"/>
    <property type="evidence" value="ECO:0007669"/>
    <property type="project" value="UniProtKB-KW"/>
</dbReference>
<dbReference type="GO" id="GO:0008804">
    <property type="term" value="F:carbamate kinase activity"/>
    <property type="evidence" value="ECO:0007669"/>
    <property type="project" value="UniProtKB-EC"/>
</dbReference>
<dbReference type="GO" id="GO:0019546">
    <property type="term" value="P:arginine deiminase pathway"/>
    <property type="evidence" value="ECO:0007669"/>
    <property type="project" value="TreeGrafter"/>
</dbReference>
<dbReference type="CDD" id="cd04235">
    <property type="entry name" value="AAK_CK"/>
    <property type="match status" value="1"/>
</dbReference>
<dbReference type="FunFam" id="3.40.1160.10:FF:000007">
    <property type="entry name" value="Carbamate kinase"/>
    <property type="match status" value="1"/>
</dbReference>
<dbReference type="Gene3D" id="3.40.1160.10">
    <property type="entry name" value="Acetylglutamate kinase-like"/>
    <property type="match status" value="1"/>
</dbReference>
<dbReference type="InterPro" id="IPR036393">
    <property type="entry name" value="AceGlu_kinase-like_sf"/>
</dbReference>
<dbReference type="InterPro" id="IPR001048">
    <property type="entry name" value="Asp/Glu/Uridylate_kinase"/>
</dbReference>
<dbReference type="InterPro" id="IPR003964">
    <property type="entry name" value="Carb_kinase"/>
</dbReference>
<dbReference type="NCBIfam" id="TIGR00746">
    <property type="entry name" value="arcC"/>
    <property type="match status" value="1"/>
</dbReference>
<dbReference type="NCBIfam" id="NF009007">
    <property type="entry name" value="PRK12352.1"/>
    <property type="match status" value="1"/>
</dbReference>
<dbReference type="NCBIfam" id="NF009008">
    <property type="entry name" value="PRK12354.1"/>
    <property type="match status" value="1"/>
</dbReference>
<dbReference type="PANTHER" id="PTHR30409">
    <property type="entry name" value="CARBAMATE KINASE"/>
    <property type="match status" value="1"/>
</dbReference>
<dbReference type="PANTHER" id="PTHR30409:SF1">
    <property type="entry name" value="CARBAMATE KINASE-RELATED"/>
    <property type="match status" value="1"/>
</dbReference>
<dbReference type="Pfam" id="PF00696">
    <property type="entry name" value="AA_kinase"/>
    <property type="match status" value="1"/>
</dbReference>
<dbReference type="PIRSF" id="PIRSF000723">
    <property type="entry name" value="Carbamate_kin"/>
    <property type="match status" value="1"/>
</dbReference>
<dbReference type="PRINTS" id="PR01469">
    <property type="entry name" value="CARBMTKINASE"/>
</dbReference>
<dbReference type="SUPFAM" id="SSF53633">
    <property type="entry name" value="Carbamate kinase-like"/>
    <property type="match status" value="1"/>
</dbReference>
<protein>
    <recommendedName>
        <fullName>Carbamate kinase</fullName>
        <ecNumber>2.7.2.2</ecNumber>
    </recommendedName>
    <alternativeName>
        <fullName>Carbamate kinase-like carbamoylphosphate synthase</fullName>
    </alternativeName>
</protein>